<feature type="chain" id="PRO_0000267583" description="Type III pantothenate kinase">
    <location>
        <begin position="1"/>
        <end position="257"/>
    </location>
</feature>
<feature type="active site" description="Proton acceptor" evidence="1">
    <location>
        <position position="110"/>
    </location>
</feature>
<feature type="binding site" evidence="1">
    <location>
        <begin position="6"/>
        <end position="13"/>
    </location>
    <ligand>
        <name>ATP</name>
        <dbReference type="ChEBI" id="CHEBI:30616"/>
    </ligand>
</feature>
<feature type="binding site" evidence="1">
    <location>
        <begin position="108"/>
        <end position="111"/>
    </location>
    <ligand>
        <name>substrate</name>
    </ligand>
</feature>
<feature type="binding site" evidence="1">
    <location>
        <position position="130"/>
    </location>
    <ligand>
        <name>K(+)</name>
        <dbReference type="ChEBI" id="CHEBI:29103"/>
    </ligand>
</feature>
<feature type="binding site" evidence="1">
    <location>
        <position position="133"/>
    </location>
    <ligand>
        <name>ATP</name>
        <dbReference type="ChEBI" id="CHEBI:30616"/>
    </ligand>
</feature>
<feature type="binding site" evidence="1">
    <location>
        <position position="185"/>
    </location>
    <ligand>
        <name>substrate</name>
    </ligand>
</feature>
<evidence type="ECO:0000255" key="1">
    <source>
        <dbReference type="HAMAP-Rule" id="MF_01274"/>
    </source>
</evidence>
<proteinExistence type="inferred from homology"/>
<name>COAX_RHORT</name>
<accession>Q2RU25</accession>
<gene>
    <name evidence="1" type="primary">coaX</name>
    <name type="ordered locus">Rru_A1570</name>
</gene>
<dbReference type="EC" id="2.7.1.33" evidence="1"/>
<dbReference type="EMBL" id="CP000230">
    <property type="protein sequence ID" value="ABC22370.1"/>
    <property type="molecule type" value="Genomic_DNA"/>
</dbReference>
<dbReference type="RefSeq" id="WP_011389445.1">
    <property type="nucleotide sequence ID" value="NC_007643.1"/>
</dbReference>
<dbReference type="RefSeq" id="YP_426657.1">
    <property type="nucleotide sequence ID" value="NC_007643.1"/>
</dbReference>
<dbReference type="SMR" id="Q2RU25"/>
<dbReference type="STRING" id="269796.Rru_A1570"/>
<dbReference type="EnsemblBacteria" id="ABC22370">
    <property type="protein sequence ID" value="ABC22370"/>
    <property type="gene ID" value="Rru_A1570"/>
</dbReference>
<dbReference type="KEGG" id="rru:Rru_A1570"/>
<dbReference type="PATRIC" id="fig|269796.9.peg.1643"/>
<dbReference type="eggNOG" id="COG1521">
    <property type="taxonomic scope" value="Bacteria"/>
</dbReference>
<dbReference type="HOGENOM" id="CLU_066627_1_0_5"/>
<dbReference type="PhylomeDB" id="Q2RU25"/>
<dbReference type="UniPathway" id="UPA00241">
    <property type="reaction ID" value="UER00352"/>
</dbReference>
<dbReference type="Proteomes" id="UP000001929">
    <property type="component" value="Chromosome"/>
</dbReference>
<dbReference type="GO" id="GO:0005737">
    <property type="term" value="C:cytoplasm"/>
    <property type="evidence" value="ECO:0007669"/>
    <property type="project" value="UniProtKB-SubCell"/>
</dbReference>
<dbReference type="GO" id="GO:0005524">
    <property type="term" value="F:ATP binding"/>
    <property type="evidence" value="ECO:0007669"/>
    <property type="project" value="UniProtKB-UniRule"/>
</dbReference>
<dbReference type="GO" id="GO:0046872">
    <property type="term" value="F:metal ion binding"/>
    <property type="evidence" value="ECO:0007669"/>
    <property type="project" value="UniProtKB-KW"/>
</dbReference>
<dbReference type="GO" id="GO:0004594">
    <property type="term" value="F:pantothenate kinase activity"/>
    <property type="evidence" value="ECO:0007669"/>
    <property type="project" value="UniProtKB-UniRule"/>
</dbReference>
<dbReference type="GO" id="GO:0015937">
    <property type="term" value="P:coenzyme A biosynthetic process"/>
    <property type="evidence" value="ECO:0007669"/>
    <property type="project" value="UniProtKB-UniRule"/>
</dbReference>
<dbReference type="CDD" id="cd24015">
    <property type="entry name" value="ASKHA_NBD_PanK-III"/>
    <property type="match status" value="1"/>
</dbReference>
<dbReference type="Gene3D" id="3.30.420.40">
    <property type="match status" value="2"/>
</dbReference>
<dbReference type="HAMAP" id="MF_01274">
    <property type="entry name" value="Pantothen_kinase_3"/>
    <property type="match status" value="1"/>
</dbReference>
<dbReference type="InterPro" id="IPR043129">
    <property type="entry name" value="ATPase_NBD"/>
</dbReference>
<dbReference type="InterPro" id="IPR004619">
    <property type="entry name" value="Type_III_PanK"/>
</dbReference>
<dbReference type="NCBIfam" id="TIGR00671">
    <property type="entry name" value="baf"/>
    <property type="match status" value="1"/>
</dbReference>
<dbReference type="NCBIfam" id="NF009844">
    <property type="entry name" value="PRK13318.1-2"/>
    <property type="match status" value="1"/>
</dbReference>
<dbReference type="NCBIfam" id="NF009848">
    <property type="entry name" value="PRK13318.1-6"/>
    <property type="match status" value="1"/>
</dbReference>
<dbReference type="NCBIfam" id="NF009855">
    <property type="entry name" value="PRK13321.1"/>
    <property type="match status" value="1"/>
</dbReference>
<dbReference type="PANTHER" id="PTHR34265">
    <property type="entry name" value="TYPE III PANTOTHENATE KINASE"/>
    <property type="match status" value="1"/>
</dbReference>
<dbReference type="PANTHER" id="PTHR34265:SF1">
    <property type="entry name" value="TYPE III PANTOTHENATE KINASE"/>
    <property type="match status" value="1"/>
</dbReference>
<dbReference type="Pfam" id="PF03309">
    <property type="entry name" value="Pan_kinase"/>
    <property type="match status" value="1"/>
</dbReference>
<dbReference type="SUPFAM" id="SSF53067">
    <property type="entry name" value="Actin-like ATPase domain"/>
    <property type="match status" value="2"/>
</dbReference>
<organism>
    <name type="scientific">Rhodospirillum rubrum (strain ATCC 11170 / ATH 1.1.1 / DSM 467 / LMG 4362 / NCIMB 8255 / S1)</name>
    <dbReference type="NCBI Taxonomy" id="269796"/>
    <lineage>
        <taxon>Bacteria</taxon>
        <taxon>Pseudomonadati</taxon>
        <taxon>Pseudomonadota</taxon>
        <taxon>Alphaproteobacteria</taxon>
        <taxon>Rhodospirillales</taxon>
        <taxon>Rhodospirillaceae</taxon>
        <taxon>Rhodospirillum</taxon>
    </lineage>
</organism>
<comment type="function">
    <text evidence="1">Catalyzes the phosphorylation of pantothenate (Pan), the first step in CoA biosynthesis.</text>
</comment>
<comment type="catalytic activity">
    <reaction evidence="1">
        <text>(R)-pantothenate + ATP = (R)-4'-phosphopantothenate + ADP + H(+)</text>
        <dbReference type="Rhea" id="RHEA:16373"/>
        <dbReference type="ChEBI" id="CHEBI:10986"/>
        <dbReference type="ChEBI" id="CHEBI:15378"/>
        <dbReference type="ChEBI" id="CHEBI:29032"/>
        <dbReference type="ChEBI" id="CHEBI:30616"/>
        <dbReference type="ChEBI" id="CHEBI:456216"/>
        <dbReference type="EC" id="2.7.1.33"/>
    </reaction>
</comment>
<comment type="cofactor">
    <cofactor evidence="1">
        <name>NH4(+)</name>
        <dbReference type="ChEBI" id="CHEBI:28938"/>
    </cofactor>
    <cofactor evidence="1">
        <name>K(+)</name>
        <dbReference type="ChEBI" id="CHEBI:29103"/>
    </cofactor>
    <text evidence="1">A monovalent cation. Ammonium or potassium.</text>
</comment>
<comment type="pathway">
    <text evidence="1">Cofactor biosynthesis; coenzyme A biosynthesis; CoA from (R)-pantothenate: step 1/5.</text>
</comment>
<comment type="subunit">
    <text evidence="1">Homodimer.</text>
</comment>
<comment type="subcellular location">
    <subcellularLocation>
        <location evidence="1">Cytoplasm</location>
    </subcellularLocation>
</comment>
<comment type="similarity">
    <text evidence="1">Belongs to the type III pantothenate kinase family.</text>
</comment>
<reference key="1">
    <citation type="journal article" date="2011" name="Stand. Genomic Sci.">
        <title>Complete genome sequence of Rhodospirillum rubrum type strain (S1).</title>
        <authorList>
            <person name="Munk A.C."/>
            <person name="Copeland A."/>
            <person name="Lucas S."/>
            <person name="Lapidus A."/>
            <person name="Del Rio T.G."/>
            <person name="Barry K."/>
            <person name="Detter J.C."/>
            <person name="Hammon N."/>
            <person name="Israni S."/>
            <person name="Pitluck S."/>
            <person name="Brettin T."/>
            <person name="Bruce D."/>
            <person name="Han C."/>
            <person name="Tapia R."/>
            <person name="Gilna P."/>
            <person name="Schmutz J."/>
            <person name="Larimer F."/>
            <person name="Land M."/>
            <person name="Kyrpides N.C."/>
            <person name="Mavromatis K."/>
            <person name="Richardson P."/>
            <person name="Rohde M."/>
            <person name="Goeker M."/>
            <person name="Klenk H.P."/>
            <person name="Zhang Y."/>
            <person name="Roberts G.P."/>
            <person name="Reslewic S."/>
            <person name="Schwartz D.C."/>
        </authorList>
    </citation>
    <scope>NUCLEOTIDE SEQUENCE [LARGE SCALE GENOMIC DNA]</scope>
    <source>
        <strain>ATCC 11170 / ATH 1.1.1 / DSM 467 / LMG 4362 / NCIMB 8255 / S1</strain>
    </source>
</reference>
<protein>
    <recommendedName>
        <fullName evidence="1">Type III pantothenate kinase</fullName>
        <ecNumber evidence="1">2.7.1.33</ecNumber>
    </recommendedName>
    <alternativeName>
        <fullName evidence="1">PanK-III</fullName>
    </alternativeName>
    <alternativeName>
        <fullName evidence="1">Pantothenic acid kinase</fullName>
    </alternativeName>
</protein>
<keyword id="KW-0067">ATP-binding</keyword>
<keyword id="KW-0173">Coenzyme A biosynthesis</keyword>
<keyword id="KW-0963">Cytoplasm</keyword>
<keyword id="KW-0418">Kinase</keyword>
<keyword id="KW-0479">Metal-binding</keyword>
<keyword id="KW-0547">Nucleotide-binding</keyword>
<keyword id="KW-0630">Potassium</keyword>
<keyword id="KW-1185">Reference proteome</keyword>
<keyword id="KW-0808">Transferase</keyword>
<sequence>MLLAIDSGNTNTVFAVYDGDAKRGEWRAATNANRTADEMGVWLLQLMTLEGLSQGDIDATIIASVVPATVFNLRMLCHRYFHSPPMVVGEPDVDLGIGILLERPDEVGADRLVNAVAAHETYRGPLIVIDFGTATTFDVVDEEGNYCGGAIAPGVNLSLEALHMASAQLPRVAIGRPRTVIGKATIPAMKSGIYLGYVGLIEGLVKRISEEFGAPMRVIATGGLAPLFAEATDAIQTIDDDLTLRGLLIIHRRNQPD</sequence>